<comment type="function">
    <text evidence="4">Inhibits gastric epithelial cell proliferation.</text>
</comment>
<comment type="subcellular location">
    <subcellularLocation>
        <location evidence="4">Secreted</location>
    </subcellularLocation>
</comment>
<comment type="tissue specificity">
    <text evidence="4">Expressed in stomach. Present in mucus cells at the base of antral glands, and Brunner glands of the duodenum. Present at lower levels in the mucus neck cell region of the fundus (at protein level).</text>
</comment>
<comment type="similarity">
    <text evidence="5">Belongs to the gastrokine family.</text>
</comment>
<accession>Q9D0T7</accession>
<reference key="1">
    <citation type="journal article" date="2010" name="Gastroenterology">
        <title>A novel gastrokine, Gkn3, marks gastric atrophy and shows evidence of adaptive gene loss in humans.</title>
        <authorList>
            <person name="Menheniott T.R."/>
            <person name="Peterson A.J."/>
            <person name="O'Connor L."/>
            <person name="Lee K.S."/>
            <person name="Kalantzis A."/>
            <person name="Kondova I."/>
            <person name="Bontrop R.E."/>
            <person name="Bell K.M."/>
            <person name="Giraud A.S."/>
        </authorList>
    </citation>
    <scope>NUCLEOTIDE SEQUENCE [MRNA]</scope>
    <scope>TISSUE SPECIFICITY</scope>
    <scope>SUBCELLULAR LOCATION</scope>
    <scope>MUTAGENESIS OF CYS-147 AND CYS-171</scope>
    <scope>FUNCTION</scope>
    <source>
        <strain>C57BL/6J</strain>
        <tissue>Stomach</tissue>
    </source>
</reference>
<reference key="2">
    <citation type="journal article" date="2005" name="Science">
        <title>The transcriptional landscape of the mammalian genome.</title>
        <authorList>
            <person name="Carninci P."/>
            <person name="Kasukawa T."/>
            <person name="Katayama S."/>
            <person name="Gough J."/>
            <person name="Frith M.C."/>
            <person name="Maeda N."/>
            <person name="Oyama R."/>
            <person name="Ravasi T."/>
            <person name="Lenhard B."/>
            <person name="Wells C."/>
            <person name="Kodzius R."/>
            <person name="Shimokawa K."/>
            <person name="Bajic V.B."/>
            <person name="Brenner S.E."/>
            <person name="Batalov S."/>
            <person name="Forrest A.R."/>
            <person name="Zavolan M."/>
            <person name="Davis M.J."/>
            <person name="Wilming L.G."/>
            <person name="Aidinis V."/>
            <person name="Allen J.E."/>
            <person name="Ambesi-Impiombato A."/>
            <person name="Apweiler R."/>
            <person name="Aturaliya R.N."/>
            <person name="Bailey T.L."/>
            <person name="Bansal M."/>
            <person name="Baxter L."/>
            <person name="Beisel K.W."/>
            <person name="Bersano T."/>
            <person name="Bono H."/>
            <person name="Chalk A.M."/>
            <person name="Chiu K.P."/>
            <person name="Choudhary V."/>
            <person name="Christoffels A."/>
            <person name="Clutterbuck D.R."/>
            <person name="Crowe M.L."/>
            <person name="Dalla E."/>
            <person name="Dalrymple B.P."/>
            <person name="de Bono B."/>
            <person name="Della Gatta G."/>
            <person name="di Bernardo D."/>
            <person name="Down T."/>
            <person name="Engstrom P."/>
            <person name="Fagiolini M."/>
            <person name="Faulkner G."/>
            <person name="Fletcher C.F."/>
            <person name="Fukushima T."/>
            <person name="Furuno M."/>
            <person name="Futaki S."/>
            <person name="Gariboldi M."/>
            <person name="Georgii-Hemming P."/>
            <person name="Gingeras T.R."/>
            <person name="Gojobori T."/>
            <person name="Green R.E."/>
            <person name="Gustincich S."/>
            <person name="Harbers M."/>
            <person name="Hayashi Y."/>
            <person name="Hensch T.K."/>
            <person name="Hirokawa N."/>
            <person name="Hill D."/>
            <person name="Huminiecki L."/>
            <person name="Iacono M."/>
            <person name="Ikeo K."/>
            <person name="Iwama A."/>
            <person name="Ishikawa T."/>
            <person name="Jakt M."/>
            <person name="Kanapin A."/>
            <person name="Katoh M."/>
            <person name="Kawasawa Y."/>
            <person name="Kelso J."/>
            <person name="Kitamura H."/>
            <person name="Kitano H."/>
            <person name="Kollias G."/>
            <person name="Krishnan S.P."/>
            <person name="Kruger A."/>
            <person name="Kummerfeld S.K."/>
            <person name="Kurochkin I.V."/>
            <person name="Lareau L.F."/>
            <person name="Lazarevic D."/>
            <person name="Lipovich L."/>
            <person name="Liu J."/>
            <person name="Liuni S."/>
            <person name="McWilliam S."/>
            <person name="Madan Babu M."/>
            <person name="Madera M."/>
            <person name="Marchionni L."/>
            <person name="Matsuda H."/>
            <person name="Matsuzawa S."/>
            <person name="Miki H."/>
            <person name="Mignone F."/>
            <person name="Miyake S."/>
            <person name="Morris K."/>
            <person name="Mottagui-Tabar S."/>
            <person name="Mulder N."/>
            <person name="Nakano N."/>
            <person name="Nakauchi H."/>
            <person name="Ng P."/>
            <person name="Nilsson R."/>
            <person name="Nishiguchi S."/>
            <person name="Nishikawa S."/>
            <person name="Nori F."/>
            <person name="Ohara O."/>
            <person name="Okazaki Y."/>
            <person name="Orlando V."/>
            <person name="Pang K.C."/>
            <person name="Pavan W.J."/>
            <person name="Pavesi G."/>
            <person name="Pesole G."/>
            <person name="Petrovsky N."/>
            <person name="Piazza S."/>
            <person name="Reed J."/>
            <person name="Reid J.F."/>
            <person name="Ring B.Z."/>
            <person name="Ringwald M."/>
            <person name="Rost B."/>
            <person name="Ruan Y."/>
            <person name="Salzberg S.L."/>
            <person name="Sandelin A."/>
            <person name="Schneider C."/>
            <person name="Schoenbach C."/>
            <person name="Sekiguchi K."/>
            <person name="Semple C.A."/>
            <person name="Seno S."/>
            <person name="Sessa L."/>
            <person name="Sheng Y."/>
            <person name="Shibata Y."/>
            <person name="Shimada H."/>
            <person name="Shimada K."/>
            <person name="Silva D."/>
            <person name="Sinclair B."/>
            <person name="Sperling S."/>
            <person name="Stupka E."/>
            <person name="Sugiura K."/>
            <person name="Sultana R."/>
            <person name="Takenaka Y."/>
            <person name="Taki K."/>
            <person name="Tammoja K."/>
            <person name="Tan S.L."/>
            <person name="Tang S."/>
            <person name="Taylor M.S."/>
            <person name="Tegner J."/>
            <person name="Teichmann S.A."/>
            <person name="Ueda H.R."/>
            <person name="van Nimwegen E."/>
            <person name="Verardo R."/>
            <person name="Wei C.L."/>
            <person name="Yagi K."/>
            <person name="Yamanishi H."/>
            <person name="Zabarovsky E."/>
            <person name="Zhu S."/>
            <person name="Zimmer A."/>
            <person name="Hide W."/>
            <person name="Bult C."/>
            <person name="Grimmond S.M."/>
            <person name="Teasdale R.D."/>
            <person name="Liu E.T."/>
            <person name="Brusic V."/>
            <person name="Quackenbush J."/>
            <person name="Wahlestedt C."/>
            <person name="Mattick J.S."/>
            <person name="Hume D.A."/>
            <person name="Kai C."/>
            <person name="Sasaki D."/>
            <person name="Tomaru Y."/>
            <person name="Fukuda S."/>
            <person name="Kanamori-Katayama M."/>
            <person name="Suzuki M."/>
            <person name="Aoki J."/>
            <person name="Arakawa T."/>
            <person name="Iida J."/>
            <person name="Imamura K."/>
            <person name="Itoh M."/>
            <person name="Kato T."/>
            <person name="Kawaji H."/>
            <person name="Kawagashira N."/>
            <person name="Kawashima T."/>
            <person name="Kojima M."/>
            <person name="Kondo S."/>
            <person name="Konno H."/>
            <person name="Nakano K."/>
            <person name="Ninomiya N."/>
            <person name="Nishio T."/>
            <person name="Okada M."/>
            <person name="Plessy C."/>
            <person name="Shibata K."/>
            <person name="Shiraki T."/>
            <person name="Suzuki S."/>
            <person name="Tagami M."/>
            <person name="Waki K."/>
            <person name="Watahiki A."/>
            <person name="Okamura-Oho Y."/>
            <person name="Suzuki H."/>
            <person name="Kawai J."/>
            <person name="Hayashizaki Y."/>
        </authorList>
    </citation>
    <scope>NUCLEOTIDE SEQUENCE [LARGE SCALE MRNA]</scope>
    <source>
        <strain>C57BL/6J</strain>
    </source>
</reference>
<reference key="3">
    <citation type="journal article" date="2009" name="PLoS Biol.">
        <title>Lineage-specific biology revealed by a finished genome assembly of the mouse.</title>
        <authorList>
            <person name="Church D.M."/>
            <person name="Goodstadt L."/>
            <person name="Hillier L.W."/>
            <person name="Zody M.C."/>
            <person name="Goldstein S."/>
            <person name="She X."/>
            <person name="Bult C.J."/>
            <person name="Agarwala R."/>
            <person name="Cherry J.L."/>
            <person name="DiCuccio M."/>
            <person name="Hlavina W."/>
            <person name="Kapustin Y."/>
            <person name="Meric P."/>
            <person name="Maglott D."/>
            <person name="Birtle Z."/>
            <person name="Marques A.C."/>
            <person name="Graves T."/>
            <person name="Zhou S."/>
            <person name="Teague B."/>
            <person name="Potamousis K."/>
            <person name="Churas C."/>
            <person name="Place M."/>
            <person name="Herschleb J."/>
            <person name="Runnheim R."/>
            <person name="Forrest D."/>
            <person name="Amos-Landgraf J."/>
            <person name="Schwartz D.C."/>
            <person name="Cheng Z."/>
            <person name="Lindblad-Toh K."/>
            <person name="Eichler E.E."/>
            <person name="Ponting C.P."/>
        </authorList>
    </citation>
    <scope>NUCLEOTIDE SEQUENCE [LARGE SCALE GENOMIC DNA]</scope>
</reference>
<reference key="4">
    <citation type="journal article" date="2004" name="Genome Res.">
        <title>The status, quality, and expansion of the NIH full-length cDNA project: the Mammalian Gene Collection (MGC).</title>
        <authorList>
            <consortium name="The MGC Project Team"/>
        </authorList>
    </citation>
    <scope>NUCLEOTIDE SEQUENCE [LARGE SCALE MRNA]</scope>
    <source>
        <tissue>Brain</tissue>
    </source>
</reference>
<sequence>MPLHSLERDNMRRLIAPSILVTVFLVPALALTNTSDSYPLDGSVGTQTIHVDALRGVVSIRDNSVQSEWDGVMDYKNDLLAAKLFSKMACVLAKMDPAAFPSLDDITQALGKQASGHYPPTRGLTYTVLPSRIKNLAQYGVPIKDLCRAVPTYFARQQKEGTALTMDPDSCSELQLLSFMGLSICGEIPGL</sequence>
<keyword id="KW-1015">Disulfide bond</keyword>
<keyword id="KW-0325">Glycoprotein</keyword>
<keyword id="KW-1185">Reference proteome</keyword>
<keyword id="KW-0964">Secreted</keyword>
<keyword id="KW-0732">Signal</keyword>
<protein>
    <recommendedName>
        <fullName>Gastrokine-3</fullName>
    </recommendedName>
</protein>
<evidence type="ECO:0000250" key="1"/>
<evidence type="ECO:0000255" key="2"/>
<evidence type="ECO:0000255" key="3">
    <source>
        <dbReference type="PROSITE-ProRule" id="PRU00255"/>
    </source>
</evidence>
<evidence type="ECO:0000269" key="4">
    <source>
    </source>
</evidence>
<evidence type="ECO:0000305" key="5"/>
<proteinExistence type="evidence at protein level"/>
<dbReference type="EMBL" id="GU220566">
    <property type="protein sequence ID" value="ADB22387.1"/>
    <property type="molecule type" value="mRNA"/>
</dbReference>
<dbReference type="EMBL" id="FN600638">
    <property type="protein sequence ID" value="CBI70313.1"/>
    <property type="molecule type" value="mRNA"/>
</dbReference>
<dbReference type="EMBL" id="AK004474">
    <property type="protein sequence ID" value="BAB23320.1"/>
    <property type="molecule type" value="mRNA"/>
</dbReference>
<dbReference type="EMBL" id="CH466523">
    <property type="protein sequence ID" value="EDK99205.1"/>
    <property type="molecule type" value="Genomic_DNA"/>
</dbReference>
<dbReference type="EMBL" id="BC116955">
    <property type="protein sequence ID" value="AAI16956.1"/>
    <property type="molecule type" value="mRNA"/>
</dbReference>
<dbReference type="CCDS" id="CCDS20320.1"/>
<dbReference type="RefSeq" id="NP_081136.1">
    <property type="nucleotide sequence ID" value="NM_026860.1"/>
</dbReference>
<dbReference type="FunCoup" id="Q9D0T7">
    <property type="interactions" value="263"/>
</dbReference>
<dbReference type="STRING" id="10090.ENSMUSP00000032127"/>
<dbReference type="GlyCosmos" id="Q9D0T7">
    <property type="glycosylation" value="1 site, No reported glycans"/>
</dbReference>
<dbReference type="GlyGen" id="Q9D0T7">
    <property type="glycosylation" value="1 site"/>
</dbReference>
<dbReference type="iPTMnet" id="Q9D0T7"/>
<dbReference type="PhosphoSitePlus" id="Q9D0T7"/>
<dbReference type="PaxDb" id="10090-ENSMUSP00000032127"/>
<dbReference type="ProteomicsDB" id="271224"/>
<dbReference type="Ensembl" id="ENSMUST00000032127.6">
    <property type="protein sequence ID" value="ENSMUSP00000032127.5"/>
    <property type="gene ID" value="ENSMUSG00000030048.6"/>
</dbReference>
<dbReference type="GeneID" id="68888"/>
<dbReference type="KEGG" id="mmu:68888"/>
<dbReference type="UCSC" id="uc009ctj.1">
    <property type="organism name" value="mouse"/>
</dbReference>
<dbReference type="AGR" id="MGI:1916138"/>
<dbReference type="CTD" id="68888"/>
<dbReference type="MGI" id="MGI:1916138">
    <property type="gene designation" value="Gkn3"/>
</dbReference>
<dbReference type="VEuPathDB" id="HostDB:ENSMUSG00000030048"/>
<dbReference type="eggNOG" id="ENOG502S4AB">
    <property type="taxonomic scope" value="Eukaryota"/>
</dbReference>
<dbReference type="GeneTree" id="ENSGT00930000150969"/>
<dbReference type="HOGENOM" id="CLU_098684_1_0_1"/>
<dbReference type="InParanoid" id="Q9D0T7"/>
<dbReference type="OMA" id="LFSKMAC"/>
<dbReference type="OrthoDB" id="9445110at2759"/>
<dbReference type="PhylomeDB" id="Q9D0T7"/>
<dbReference type="TreeFam" id="TF335950"/>
<dbReference type="BioGRID-ORCS" id="68888">
    <property type="hits" value="5 hits in 78 CRISPR screens"/>
</dbReference>
<dbReference type="ChiTaRS" id="Gkn3">
    <property type="organism name" value="mouse"/>
</dbReference>
<dbReference type="PRO" id="PR:Q9D0T7"/>
<dbReference type="Proteomes" id="UP000000589">
    <property type="component" value="Chromosome 6"/>
</dbReference>
<dbReference type="RNAct" id="Q9D0T7">
    <property type="molecule type" value="protein"/>
</dbReference>
<dbReference type="Bgee" id="ENSMUSG00000030048">
    <property type="expression patterns" value="Expressed in epithelium of stomach and 123 other cell types or tissues"/>
</dbReference>
<dbReference type="GO" id="GO:0005615">
    <property type="term" value="C:extracellular space"/>
    <property type="evidence" value="ECO:0000314"/>
    <property type="project" value="MGI"/>
</dbReference>
<dbReference type="GO" id="GO:0050680">
    <property type="term" value="P:negative regulation of epithelial cell proliferation"/>
    <property type="evidence" value="ECO:0000314"/>
    <property type="project" value="MGI"/>
</dbReference>
<dbReference type="FunFam" id="3.30.390.150:FF:000005">
    <property type="entry name" value="Gastrokine-3"/>
    <property type="match status" value="1"/>
</dbReference>
<dbReference type="Gene3D" id="3.30.390.150">
    <property type="match status" value="1"/>
</dbReference>
<dbReference type="InterPro" id="IPR007084">
    <property type="entry name" value="BRICHOS_dom"/>
</dbReference>
<dbReference type="InterPro" id="IPR051772">
    <property type="entry name" value="Gastrokine"/>
</dbReference>
<dbReference type="PANTHER" id="PTHR16483">
    <property type="entry name" value="GASTROKINE 1"/>
    <property type="match status" value="1"/>
</dbReference>
<dbReference type="Pfam" id="PF04089">
    <property type="entry name" value="BRICHOS"/>
    <property type="match status" value="1"/>
</dbReference>
<dbReference type="SMART" id="SM01039">
    <property type="entry name" value="BRICHOS"/>
    <property type="match status" value="1"/>
</dbReference>
<dbReference type="PROSITE" id="PS50869">
    <property type="entry name" value="BRICHOS"/>
    <property type="match status" value="1"/>
</dbReference>
<feature type="signal peptide" evidence="2">
    <location>
        <begin position="1"/>
        <end position="30"/>
    </location>
</feature>
<feature type="chain" id="PRO_0000394474" description="Gastrokine-3">
    <location>
        <begin position="31"/>
        <end position="191"/>
    </location>
</feature>
<feature type="domain" description="BRICHOS" evidence="3">
    <location>
        <begin position="63"/>
        <end position="155"/>
    </location>
</feature>
<feature type="glycosylation site" description="N-linked (GlcNAc...) asparagine" evidence="2">
    <location>
        <position position="33"/>
    </location>
</feature>
<feature type="disulfide bond" evidence="1">
    <location>
        <begin position="90"/>
        <end position="147"/>
    </location>
</feature>
<feature type="mutagenesis site" description="Impaired secretion." evidence="4">
    <original>C</original>
    <variation>G</variation>
    <location>
        <position position="147"/>
    </location>
</feature>
<feature type="mutagenesis site" description="Impaired secretion." evidence="4">
    <original>C</original>
    <variation>G</variation>
    <location>
        <position position="171"/>
    </location>
</feature>
<name>GKN3_MOUSE</name>
<organism>
    <name type="scientific">Mus musculus</name>
    <name type="common">Mouse</name>
    <dbReference type="NCBI Taxonomy" id="10090"/>
    <lineage>
        <taxon>Eukaryota</taxon>
        <taxon>Metazoa</taxon>
        <taxon>Chordata</taxon>
        <taxon>Craniata</taxon>
        <taxon>Vertebrata</taxon>
        <taxon>Euteleostomi</taxon>
        <taxon>Mammalia</taxon>
        <taxon>Eutheria</taxon>
        <taxon>Euarchontoglires</taxon>
        <taxon>Glires</taxon>
        <taxon>Rodentia</taxon>
        <taxon>Myomorpha</taxon>
        <taxon>Muroidea</taxon>
        <taxon>Muridae</taxon>
        <taxon>Murinae</taxon>
        <taxon>Mus</taxon>
        <taxon>Mus</taxon>
    </lineage>
</organism>
<gene>
    <name type="primary">Gkn3</name>
</gene>